<organism>
    <name type="scientific">Salmonella gallinarum (strain 287/91 / NCTC 13346)</name>
    <dbReference type="NCBI Taxonomy" id="550538"/>
    <lineage>
        <taxon>Bacteria</taxon>
        <taxon>Pseudomonadati</taxon>
        <taxon>Pseudomonadota</taxon>
        <taxon>Gammaproteobacteria</taxon>
        <taxon>Enterobacterales</taxon>
        <taxon>Enterobacteriaceae</taxon>
        <taxon>Salmonella</taxon>
    </lineage>
</organism>
<feature type="chain" id="PRO_1000127615" description="L-arabinose isomerase">
    <location>
        <begin position="1"/>
        <end position="500"/>
    </location>
</feature>
<feature type="binding site" evidence="1">
    <location>
        <position position="306"/>
    </location>
    <ligand>
        <name>Mn(2+)</name>
        <dbReference type="ChEBI" id="CHEBI:29035"/>
    </ligand>
</feature>
<feature type="binding site" evidence="1">
    <location>
        <position position="333"/>
    </location>
    <ligand>
        <name>Mn(2+)</name>
        <dbReference type="ChEBI" id="CHEBI:29035"/>
    </ligand>
</feature>
<feature type="binding site" evidence="1">
    <location>
        <position position="350"/>
    </location>
    <ligand>
        <name>Mn(2+)</name>
        <dbReference type="ChEBI" id="CHEBI:29035"/>
    </ligand>
</feature>
<feature type="binding site" evidence="1">
    <location>
        <position position="450"/>
    </location>
    <ligand>
        <name>Mn(2+)</name>
        <dbReference type="ChEBI" id="CHEBI:29035"/>
    </ligand>
</feature>
<accession>B5RGD3</accession>
<name>ARAA_SALG2</name>
<dbReference type="EC" id="5.3.1.4" evidence="1"/>
<dbReference type="EMBL" id="AM933173">
    <property type="protein sequence ID" value="CAR36010.1"/>
    <property type="molecule type" value="Genomic_DNA"/>
</dbReference>
<dbReference type="RefSeq" id="WP_000151703.1">
    <property type="nucleotide sequence ID" value="NC_011274.1"/>
</dbReference>
<dbReference type="SMR" id="B5RGD3"/>
<dbReference type="KEGG" id="seg:SG0103"/>
<dbReference type="HOGENOM" id="CLU_045663_0_0_6"/>
<dbReference type="UniPathway" id="UPA00145">
    <property type="reaction ID" value="UER00565"/>
</dbReference>
<dbReference type="Proteomes" id="UP000008321">
    <property type="component" value="Chromosome"/>
</dbReference>
<dbReference type="GO" id="GO:0005829">
    <property type="term" value="C:cytosol"/>
    <property type="evidence" value="ECO:0007669"/>
    <property type="project" value="TreeGrafter"/>
</dbReference>
<dbReference type="GO" id="GO:0008733">
    <property type="term" value="F:L-arabinose isomerase activity"/>
    <property type="evidence" value="ECO:0007669"/>
    <property type="project" value="UniProtKB-UniRule"/>
</dbReference>
<dbReference type="GO" id="GO:0030145">
    <property type="term" value="F:manganese ion binding"/>
    <property type="evidence" value="ECO:0007669"/>
    <property type="project" value="UniProtKB-UniRule"/>
</dbReference>
<dbReference type="GO" id="GO:0019569">
    <property type="term" value="P:L-arabinose catabolic process to xylulose 5-phosphate"/>
    <property type="evidence" value="ECO:0007669"/>
    <property type="project" value="UniProtKB-UniRule"/>
</dbReference>
<dbReference type="CDD" id="cd03557">
    <property type="entry name" value="L-arabinose_isomerase"/>
    <property type="match status" value="1"/>
</dbReference>
<dbReference type="FunFam" id="3.40.50.10940:FF:000001">
    <property type="entry name" value="L-arabinose isomerase"/>
    <property type="match status" value="1"/>
</dbReference>
<dbReference type="Gene3D" id="3.40.50.10940">
    <property type="match status" value="1"/>
</dbReference>
<dbReference type="HAMAP" id="MF_00519">
    <property type="entry name" value="Arabinose_Isome"/>
    <property type="match status" value="1"/>
</dbReference>
<dbReference type="InterPro" id="IPR024664">
    <property type="entry name" value="Ara_Isoase_C"/>
</dbReference>
<dbReference type="InterPro" id="IPR055390">
    <property type="entry name" value="AraA_central"/>
</dbReference>
<dbReference type="InterPro" id="IPR055389">
    <property type="entry name" value="AraA_N"/>
</dbReference>
<dbReference type="InterPro" id="IPR038583">
    <property type="entry name" value="AraA_N_sf"/>
</dbReference>
<dbReference type="InterPro" id="IPR004216">
    <property type="entry name" value="Fuc/Ara_isomerase_C"/>
</dbReference>
<dbReference type="InterPro" id="IPR009015">
    <property type="entry name" value="Fucose_isomerase_N/cen_sf"/>
</dbReference>
<dbReference type="InterPro" id="IPR003762">
    <property type="entry name" value="Lara_isomerase"/>
</dbReference>
<dbReference type="NCBIfam" id="NF002795">
    <property type="entry name" value="PRK02929.1"/>
    <property type="match status" value="1"/>
</dbReference>
<dbReference type="PANTHER" id="PTHR38464">
    <property type="entry name" value="L-ARABINOSE ISOMERASE"/>
    <property type="match status" value="1"/>
</dbReference>
<dbReference type="PANTHER" id="PTHR38464:SF1">
    <property type="entry name" value="L-ARABINOSE ISOMERASE"/>
    <property type="match status" value="1"/>
</dbReference>
<dbReference type="Pfam" id="PF24856">
    <property type="entry name" value="AraA_central"/>
    <property type="match status" value="1"/>
</dbReference>
<dbReference type="Pfam" id="PF02610">
    <property type="entry name" value="AraA_N"/>
    <property type="match status" value="1"/>
</dbReference>
<dbReference type="Pfam" id="PF11762">
    <property type="entry name" value="Arabinose_Iso_C"/>
    <property type="match status" value="1"/>
</dbReference>
<dbReference type="PIRSF" id="PIRSF001478">
    <property type="entry name" value="L-ara_isomerase"/>
    <property type="match status" value="1"/>
</dbReference>
<dbReference type="SUPFAM" id="SSF50443">
    <property type="entry name" value="FucI/AraA C-terminal domain-like"/>
    <property type="match status" value="1"/>
</dbReference>
<dbReference type="SUPFAM" id="SSF53743">
    <property type="entry name" value="FucI/AraA N-terminal and middle domains"/>
    <property type="match status" value="1"/>
</dbReference>
<gene>
    <name evidence="1" type="primary">araA</name>
    <name type="ordered locus">SG0103</name>
</gene>
<protein>
    <recommendedName>
        <fullName evidence="1">L-arabinose isomerase</fullName>
        <ecNumber evidence="1">5.3.1.4</ecNumber>
    </recommendedName>
</protein>
<proteinExistence type="inferred from homology"/>
<sequence>MTIFDNYEVWFVIGSQHLYGAETLRQVTQHAEHVVNALNTEAKLPCKLVLKPLGTSPDEITAICRDANYDDRCAGLVVWLHTFSPAKMWINGLSILNKPLLQFHTQFNAALPWDSIDMDFMNLNQTAHGGREFGFIGARMRQQHSVVTGHWQDKEAHTRIGAWMRQAVSKQDTRQLKVCRFGDNMREVAVTDGDKVAAQIKFGFSVNTWAVGDLVQVVNAISDGDINALIDEYESSYTLTPATRIHGDKRQNVREAARIELGMKRFLEQGGFHAFTTTFEDLHGLKQLPGLAVQRLMQQGYGFAGEGDWKTAALLRIMKVMSTGLQGGTSFMEDYTYHFEKGNDLVLGSHMLEVCPSIAVEEKPILDVQHLGIGGKEDPARLIFNTQTGPAIVASLIDLGDRYRLLVNCIDTVKTPHSLPKLPVANALWKAQPDLPTASEAWILAGGAHHTVFSHALDLNDMRQFAEIHDIEIAVIDNDTRLPAFKDALRWNEVYYGFKR</sequence>
<reference key="1">
    <citation type="journal article" date="2008" name="Genome Res.">
        <title>Comparative genome analysis of Salmonella enteritidis PT4 and Salmonella gallinarum 287/91 provides insights into evolutionary and host adaptation pathways.</title>
        <authorList>
            <person name="Thomson N.R."/>
            <person name="Clayton D.J."/>
            <person name="Windhorst D."/>
            <person name="Vernikos G."/>
            <person name="Davidson S."/>
            <person name="Churcher C."/>
            <person name="Quail M.A."/>
            <person name="Stevens M."/>
            <person name="Jones M.A."/>
            <person name="Watson M."/>
            <person name="Barron A."/>
            <person name="Layton A."/>
            <person name="Pickard D."/>
            <person name="Kingsley R.A."/>
            <person name="Bignell A."/>
            <person name="Clark L."/>
            <person name="Harris B."/>
            <person name="Ormond D."/>
            <person name="Abdellah Z."/>
            <person name="Brooks K."/>
            <person name="Cherevach I."/>
            <person name="Chillingworth T."/>
            <person name="Woodward J."/>
            <person name="Norberczak H."/>
            <person name="Lord A."/>
            <person name="Arrowsmith C."/>
            <person name="Jagels K."/>
            <person name="Moule S."/>
            <person name="Mungall K."/>
            <person name="Saunders M."/>
            <person name="Whitehead S."/>
            <person name="Chabalgoity J.A."/>
            <person name="Maskell D."/>
            <person name="Humphreys T."/>
            <person name="Roberts M."/>
            <person name="Barrow P.A."/>
            <person name="Dougan G."/>
            <person name="Parkhill J."/>
        </authorList>
    </citation>
    <scope>NUCLEOTIDE SEQUENCE [LARGE SCALE GENOMIC DNA]</scope>
    <source>
        <strain>287/91 / NCTC 13346</strain>
    </source>
</reference>
<comment type="function">
    <text evidence="1">Catalyzes the conversion of L-arabinose to L-ribulose.</text>
</comment>
<comment type="catalytic activity">
    <reaction evidence="1">
        <text>beta-L-arabinopyranose = L-ribulose</text>
        <dbReference type="Rhea" id="RHEA:14821"/>
        <dbReference type="ChEBI" id="CHEBI:16880"/>
        <dbReference type="ChEBI" id="CHEBI:40886"/>
        <dbReference type="EC" id="5.3.1.4"/>
    </reaction>
</comment>
<comment type="cofactor">
    <cofactor evidence="1">
        <name>Mn(2+)</name>
        <dbReference type="ChEBI" id="CHEBI:29035"/>
    </cofactor>
    <text evidence="1">Binds 1 Mn(2+) ion per subunit.</text>
</comment>
<comment type="pathway">
    <text evidence="1">Carbohydrate degradation; L-arabinose degradation via L-ribulose; D-xylulose 5-phosphate from L-arabinose (bacterial route): step 1/3.</text>
</comment>
<comment type="subunit">
    <text evidence="1">Homohexamer.</text>
</comment>
<comment type="similarity">
    <text evidence="1">Belongs to the arabinose isomerase family.</text>
</comment>
<keyword id="KW-0054">Arabinose catabolism</keyword>
<keyword id="KW-0119">Carbohydrate metabolism</keyword>
<keyword id="KW-0413">Isomerase</keyword>
<keyword id="KW-0464">Manganese</keyword>
<keyword id="KW-0479">Metal-binding</keyword>
<evidence type="ECO:0000255" key="1">
    <source>
        <dbReference type="HAMAP-Rule" id="MF_00519"/>
    </source>
</evidence>